<name>ENO1_CANGA</name>
<protein>
    <recommendedName>
        <fullName>Enolase 1</fullName>
        <ecNumber>4.2.1.11</ecNumber>
    </recommendedName>
    <alternativeName>
        <fullName>2-phospho-D-glycerate hydro-lyase 1</fullName>
    </alternativeName>
    <alternativeName>
        <fullName>2-phosphoglycerate dehydratase 1</fullName>
    </alternativeName>
</protein>
<proteinExistence type="inferred from homology"/>
<sequence length="438" mass="47282">MSVTKVHARTVYDSRGNPTVEVEVYTKDGMFRAIVPSGASTGSHEALELRDGDKSKWEGKGVTKAVSNVNDIIGPKLIESKLDVKDQKAIDEFMIKLDGTKNKSKLGANAILGVSLAVARAGAAAKGVPLYQHIAELADMKKEPYVIPCPFFNVLNGGVHAGGNLALQEFLIAPVGAESFHEALRLGSEVYHKLKALAKKRIGSSAGNVGDEGGIAPSLSTPFEALDLIYDAIKEAGHEGKVKIAMDPASSEFFQGDKYDLDFKNPHPDAKNKLSGAQLGDYYKTILEKYPIVSLEDPFAEDDWEAWTNFFPKAGVQIIADDLTVTNPERIQTAIDKKTADCLLLKVNQIGSLTESINSAKLAYGAGWGVQVSHRSGETEDTFIADLVVGLRTGQIKSGSLARSERLAKWNQILRIEEELGASNTIFAGAKFHKGQLL</sequence>
<keyword id="KW-0963">Cytoplasm</keyword>
<keyword id="KW-0324">Glycolysis</keyword>
<keyword id="KW-0456">Lyase</keyword>
<keyword id="KW-0460">Magnesium</keyword>
<keyword id="KW-0479">Metal-binding</keyword>
<keyword id="KW-1185">Reference proteome</keyword>
<dbReference type="EC" id="4.2.1.11"/>
<dbReference type="EMBL" id="CR380952">
    <property type="protein sequence ID" value="CAG59252.1"/>
    <property type="molecule type" value="Genomic_DNA"/>
</dbReference>
<dbReference type="RefSeq" id="XP_446328.1">
    <property type="nucleotide sequence ID" value="XM_446328.1"/>
</dbReference>
<dbReference type="SMR" id="Q6FTW6"/>
<dbReference type="STRING" id="284593.Q6FTW6"/>
<dbReference type="EnsemblFungi" id="CAGL0F08261g-T">
    <property type="protein sequence ID" value="CAGL0F08261g-T-p1"/>
    <property type="gene ID" value="CAGL0F08261g"/>
</dbReference>
<dbReference type="KEGG" id="cgr:2887972"/>
<dbReference type="CGD" id="CAL0131204">
    <property type="gene designation" value="CAGL0F08261g"/>
</dbReference>
<dbReference type="VEuPathDB" id="FungiDB:CAGL0F08261g"/>
<dbReference type="eggNOG" id="KOG2670">
    <property type="taxonomic scope" value="Eukaryota"/>
</dbReference>
<dbReference type="HOGENOM" id="CLU_031223_0_0_1"/>
<dbReference type="InParanoid" id="Q6FTW6"/>
<dbReference type="OMA" id="GMSITKI"/>
<dbReference type="UniPathway" id="UPA00109">
    <property type="reaction ID" value="UER00187"/>
</dbReference>
<dbReference type="Proteomes" id="UP000002428">
    <property type="component" value="Chromosome F"/>
</dbReference>
<dbReference type="GO" id="GO:0062040">
    <property type="term" value="C:fungal biofilm matrix"/>
    <property type="evidence" value="ECO:0000314"/>
    <property type="project" value="CGD"/>
</dbReference>
<dbReference type="GO" id="GO:0000015">
    <property type="term" value="C:phosphopyruvate hydratase complex"/>
    <property type="evidence" value="ECO:0007669"/>
    <property type="project" value="InterPro"/>
</dbReference>
<dbReference type="GO" id="GO:0000287">
    <property type="term" value="F:magnesium ion binding"/>
    <property type="evidence" value="ECO:0007669"/>
    <property type="project" value="InterPro"/>
</dbReference>
<dbReference type="GO" id="GO:0004634">
    <property type="term" value="F:phosphopyruvate hydratase activity"/>
    <property type="evidence" value="ECO:0007669"/>
    <property type="project" value="UniProtKB-EC"/>
</dbReference>
<dbReference type="GO" id="GO:0006096">
    <property type="term" value="P:glycolytic process"/>
    <property type="evidence" value="ECO:0007669"/>
    <property type="project" value="UniProtKB-UniPathway"/>
</dbReference>
<dbReference type="CDD" id="cd03313">
    <property type="entry name" value="enolase"/>
    <property type="match status" value="1"/>
</dbReference>
<dbReference type="FunFam" id="3.30.390.10:FF:000001">
    <property type="entry name" value="Enolase"/>
    <property type="match status" value="1"/>
</dbReference>
<dbReference type="FunFam" id="3.20.20.120:FF:000002">
    <property type="entry name" value="Enolase 1"/>
    <property type="match status" value="1"/>
</dbReference>
<dbReference type="Gene3D" id="3.20.20.120">
    <property type="entry name" value="Enolase-like C-terminal domain"/>
    <property type="match status" value="1"/>
</dbReference>
<dbReference type="Gene3D" id="3.30.390.10">
    <property type="entry name" value="Enolase-like, N-terminal domain"/>
    <property type="match status" value="1"/>
</dbReference>
<dbReference type="HAMAP" id="MF_00318">
    <property type="entry name" value="Enolase"/>
    <property type="match status" value="1"/>
</dbReference>
<dbReference type="InterPro" id="IPR000941">
    <property type="entry name" value="Enolase"/>
</dbReference>
<dbReference type="InterPro" id="IPR036849">
    <property type="entry name" value="Enolase-like_C_sf"/>
</dbReference>
<dbReference type="InterPro" id="IPR029017">
    <property type="entry name" value="Enolase-like_N"/>
</dbReference>
<dbReference type="InterPro" id="IPR020810">
    <property type="entry name" value="Enolase_C"/>
</dbReference>
<dbReference type="InterPro" id="IPR020809">
    <property type="entry name" value="Enolase_CS"/>
</dbReference>
<dbReference type="InterPro" id="IPR020811">
    <property type="entry name" value="Enolase_N"/>
</dbReference>
<dbReference type="NCBIfam" id="TIGR01060">
    <property type="entry name" value="eno"/>
    <property type="match status" value="1"/>
</dbReference>
<dbReference type="PANTHER" id="PTHR11902">
    <property type="entry name" value="ENOLASE"/>
    <property type="match status" value="1"/>
</dbReference>
<dbReference type="PANTHER" id="PTHR11902:SF1">
    <property type="entry name" value="ENOLASE"/>
    <property type="match status" value="1"/>
</dbReference>
<dbReference type="Pfam" id="PF00113">
    <property type="entry name" value="Enolase_C"/>
    <property type="match status" value="1"/>
</dbReference>
<dbReference type="Pfam" id="PF03952">
    <property type="entry name" value="Enolase_N"/>
    <property type="match status" value="1"/>
</dbReference>
<dbReference type="PIRSF" id="PIRSF001400">
    <property type="entry name" value="Enolase"/>
    <property type="match status" value="1"/>
</dbReference>
<dbReference type="PRINTS" id="PR00148">
    <property type="entry name" value="ENOLASE"/>
</dbReference>
<dbReference type="SFLD" id="SFLDF00002">
    <property type="entry name" value="enolase"/>
    <property type="match status" value="1"/>
</dbReference>
<dbReference type="SFLD" id="SFLDG00178">
    <property type="entry name" value="enolase"/>
    <property type="match status" value="1"/>
</dbReference>
<dbReference type="SMART" id="SM01192">
    <property type="entry name" value="Enolase_C"/>
    <property type="match status" value="1"/>
</dbReference>
<dbReference type="SMART" id="SM01193">
    <property type="entry name" value="Enolase_N"/>
    <property type="match status" value="1"/>
</dbReference>
<dbReference type="SUPFAM" id="SSF51604">
    <property type="entry name" value="Enolase C-terminal domain-like"/>
    <property type="match status" value="1"/>
</dbReference>
<dbReference type="SUPFAM" id="SSF54826">
    <property type="entry name" value="Enolase N-terminal domain-like"/>
    <property type="match status" value="1"/>
</dbReference>
<dbReference type="PROSITE" id="PS00164">
    <property type="entry name" value="ENOLASE"/>
    <property type="match status" value="1"/>
</dbReference>
<evidence type="ECO:0000250" key="1"/>
<evidence type="ECO:0000305" key="2"/>
<reference key="1">
    <citation type="journal article" date="2004" name="Nature">
        <title>Genome evolution in yeasts.</title>
        <authorList>
            <person name="Dujon B."/>
            <person name="Sherman D."/>
            <person name="Fischer G."/>
            <person name="Durrens P."/>
            <person name="Casaregola S."/>
            <person name="Lafontaine I."/>
            <person name="de Montigny J."/>
            <person name="Marck C."/>
            <person name="Neuveglise C."/>
            <person name="Talla E."/>
            <person name="Goffard N."/>
            <person name="Frangeul L."/>
            <person name="Aigle M."/>
            <person name="Anthouard V."/>
            <person name="Babour A."/>
            <person name="Barbe V."/>
            <person name="Barnay S."/>
            <person name="Blanchin S."/>
            <person name="Beckerich J.-M."/>
            <person name="Beyne E."/>
            <person name="Bleykasten C."/>
            <person name="Boisrame A."/>
            <person name="Boyer J."/>
            <person name="Cattolico L."/>
            <person name="Confanioleri F."/>
            <person name="de Daruvar A."/>
            <person name="Despons L."/>
            <person name="Fabre E."/>
            <person name="Fairhead C."/>
            <person name="Ferry-Dumazet H."/>
            <person name="Groppi A."/>
            <person name="Hantraye F."/>
            <person name="Hennequin C."/>
            <person name="Jauniaux N."/>
            <person name="Joyet P."/>
            <person name="Kachouri R."/>
            <person name="Kerrest A."/>
            <person name="Koszul R."/>
            <person name="Lemaire M."/>
            <person name="Lesur I."/>
            <person name="Ma L."/>
            <person name="Muller H."/>
            <person name="Nicaud J.-M."/>
            <person name="Nikolski M."/>
            <person name="Oztas S."/>
            <person name="Ozier-Kalogeropoulos O."/>
            <person name="Pellenz S."/>
            <person name="Potier S."/>
            <person name="Richard G.-F."/>
            <person name="Straub M.-L."/>
            <person name="Suleau A."/>
            <person name="Swennen D."/>
            <person name="Tekaia F."/>
            <person name="Wesolowski-Louvel M."/>
            <person name="Westhof E."/>
            <person name="Wirth B."/>
            <person name="Zeniou-Meyer M."/>
            <person name="Zivanovic Y."/>
            <person name="Bolotin-Fukuhara M."/>
            <person name="Thierry A."/>
            <person name="Bouchier C."/>
            <person name="Caudron B."/>
            <person name="Scarpelli C."/>
            <person name="Gaillardin C."/>
            <person name="Weissenbach J."/>
            <person name="Wincker P."/>
            <person name="Souciet J.-L."/>
        </authorList>
    </citation>
    <scope>NUCLEOTIDE SEQUENCE [LARGE SCALE GENOMIC DNA]</scope>
    <source>
        <strain>ATCC 2001 / BCRC 20586 / JCM 3761 / NBRC 0622 / NRRL Y-65 / CBS 138</strain>
    </source>
</reference>
<gene>
    <name type="primary">ENO1</name>
    <name type="ordered locus">CAGL0F08261g</name>
</gene>
<comment type="catalytic activity">
    <reaction>
        <text>(2R)-2-phosphoglycerate = phosphoenolpyruvate + H2O</text>
        <dbReference type="Rhea" id="RHEA:10164"/>
        <dbReference type="ChEBI" id="CHEBI:15377"/>
        <dbReference type="ChEBI" id="CHEBI:58289"/>
        <dbReference type="ChEBI" id="CHEBI:58702"/>
        <dbReference type="EC" id="4.2.1.11"/>
    </reaction>
</comment>
<comment type="cofactor">
    <cofactor evidence="1">
        <name>Mg(2+)</name>
        <dbReference type="ChEBI" id="CHEBI:18420"/>
    </cofactor>
    <text evidence="1">Mg(2+) is required for catalysis and for stabilizing the dimer.</text>
</comment>
<comment type="pathway">
    <text>Carbohydrate degradation; glycolysis; pyruvate from D-glyceraldehyde 3-phosphate: step 4/5.</text>
</comment>
<comment type="subunit">
    <text evidence="1">Homodimer.</text>
</comment>
<comment type="subcellular location">
    <subcellularLocation>
        <location evidence="1">Cytoplasm</location>
    </subcellularLocation>
</comment>
<comment type="similarity">
    <text evidence="2">Belongs to the enolase family.</text>
</comment>
<feature type="chain" id="PRO_0000134044" description="Enolase 1">
    <location>
        <begin position="1"/>
        <end position="438"/>
    </location>
</feature>
<feature type="active site" description="Proton donor" evidence="1">
    <location>
        <position position="212"/>
    </location>
</feature>
<feature type="active site" description="Proton acceptor" evidence="1">
    <location>
        <position position="346"/>
    </location>
</feature>
<feature type="binding site" evidence="1">
    <location>
        <position position="160"/>
    </location>
    <ligand>
        <name>substrate</name>
    </ligand>
</feature>
<feature type="binding site" evidence="1">
    <location>
        <position position="169"/>
    </location>
    <ligand>
        <name>substrate</name>
    </ligand>
</feature>
<feature type="binding site" evidence="1">
    <location>
        <position position="247"/>
    </location>
    <ligand>
        <name>Mg(2+)</name>
        <dbReference type="ChEBI" id="CHEBI:18420"/>
    </ligand>
</feature>
<feature type="binding site" evidence="1">
    <location>
        <position position="296"/>
    </location>
    <ligand>
        <name>Mg(2+)</name>
        <dbReference type="ChEBI" id="CHEBI:18420"/>
    </ligand>
</feature>
<feature type="binding site" evidence="1">
    <location>
        <position position="296"/>
    </location>
    <ligand>
        <name>substrate</name>
    </ligand>
</feature>
<feature type="binding site" evidence="1">
    <location>
        <position position="321"/>
    </location>
    <ligand>
        <name>Mg(2+)</name>
        <dbReference type="ChEBI" id="CHEBI:18420"/>
    </ligand>
</feature>
<feature type="binding site" evidence="1">
    <location>
        <position position="321"/>
    </location>
    <ligand>
        <name>substrate</name>
    </ligand>
</feature>
<feature type="binding site" evidence="1">
    <location>
        <begin position="373"/>
        <end position="376"/>
    </location>
    <ligand>
        <name>substrate</name>
    </ligand>
</feature>
<feature type="binding site" evidence="1">
    <location>
        <position position="397"/>
    </location>
    <ligand>
        <name>substrate</name>
    </ligand>
</feature>
<organism>
    <name type="scientific">Candida glabrata (strain ATCC 2001 / BCRC 20586 / JCM 3761 / NBRC 0622 / NRRL Y-65 / CBS 138)</name>
    <name type="common">Yeast</name>
    <name type="synonym">Nakaseomyces glabratus</name>
    <dbReference type="NCBI Taxonomy" id="284593"/>
    <lineage>
        <taxon>Eukaryota</taxon>
        <taxon>Fungi</taxon>
        <taxon>Dikarya</taxon>
        <taxon>Ascomycota</taxon>
        <taxon>Saccharomycotina</taxon>
        <taxon>Saccharomycetes</taxon>
        <taxon>Saccharomycetales</taxon>
        <taxon>Saccharomycetaceae</taxon>
        <taxon>Nakaseomyces</taxon>
    </lineage>
</organism>
<accession>Q6FTW6</accession>